<gene>
    <name type="primary">N</name>
</gene>
<organism>
    <name type="scientific">Escherichia phage P2</name>
    <name type="common">Bacteriophage P2</name>
    <dbReference type="NCBI Taxonomy" id="2905681"/>
    <lineage>
        <taxon>Viruses</taxon>
        <taxon>Duplodnaviria</taxon>
        <taxon>Heunggongvirae</taxon>
        <taxon>Uroviricota</taxon>
        <taxon>Caudoviricetes</taxon>
        <taxon>Peduoviridae</taxon>
        <taxon>Peduovirus</taxon>
        <taxon>Peduovirus P2</taxon>
    </lineage>
</organism>
<name>CAPSD_BPP2</name>
<organismHost>
    <name type="scientific">Enterobacteriaceae</name>
    <dbReference type="NCBI Taxonomy" id="543"/>
</organismHost>
<feature type="propeptide" id="PRO_0000223266">
    <location>
        <begin position="1"/>
        <end position="9"/>
    </location>
</feature>
<feature type="chain" id="PRO_0000165257" description="Minor capsid protein H1">
    <location>
        <begin position="10"/>
        <end position="357"/>
    </location>
</feature>
<feature type="chain" id="PRO_0000223264" description="Minor capsid protein H2">
    <location>
        <begin position="14"/>
        <end position="357"/>
    </location>
</feature>
<feature type="chain" id="PRO_0000223265" description="Major capsid protein N*">
    <location>
        <begin position="32"/>
        <end position="357"/>
    </location>
</feature>
<protein>
    <recommendedName>
        <fullName>Capsid proteins</fullName>
    </recommendedName>
    <alternativeName>
        <fullName>GpN</fullName>
    </alternativeName>
    <component>
        <recommendedName>
            <fullName>Minor capsid protein H1</fullName>
        </recommendedName>
    </component>
    <component>
        <recommendedName>
            <fullName>Minor capsid protein H2</fullName>
        </recommendedName>
    </component>
    <component>
        <recommendedName>
            <fullName>Major capsid protein N*</fullName>
        </recommendedName>
        <alternativeName>
            <fullName evidence="2">Major head protein</fullName>
        </alternativeName>
    </component>
</protein>
<proteinExistence type="evidence at protein level"/>
<dbReference type="EMBL" id="AF063097">
    <property type="protein sequence ID" value="AAD03271.1"/>
    <property type="molecule type" value="Genomic_DNA"/>
</dbReference>
<dbReference type="PIR" id="S22799">
    <property type="entry name" value="S22799"/>
</dbReference>
<dbReference type="RefSeq" id="NP_046760.1">
    <property type="nucleotide sequence ID" value="NC_001895.1"/>
</dbReference>
<dbReference type="PDB" id="7JW1">
    <property type="method" value="EM"/>
    <property type="resolution" value="4.19 A"/>
    <property type="chains" value="A/B/C/D/a/b/c/d=1-357"/>
</dbReference>
<dbReference type="PDBsum" id="7JW1"/>
<dbReference type="EMDB" id="EMD-22513"/>
<dbReference type="SMR" id="P25477"/>
<dbReference type="GeneID" id="77440791"/>
<dbReference type="KEGG" id="vg:77440791"/>
<dbReference type="Proteomes" id="UP000009092">
    <property type="component" value="Genome"/>
</dbReference>
<dbReference type="GO" id="GO:0019028">
    <property type="term" value="C:viral capsid"/>
    <property type="evidence" value="ECO:0007669"/>
    <property type="project" value="UniProtKB-KW"/>
</dbReference>
<dbReference type="InterPro" id="IPR006441">
    <property type="entry name" value="Phage_P2_GpN"/>
</dbReference>
<dbReference type="NCBIfam" id="TIGR01551">
    <property type="entry name" value="major_capsid_P2"/>
    <property type="match status" value="1"/>
</dbReference>
<dbReference type="Pfam" id="PF05125">
    <property type="entry name" value="Phage_cap_P2"/>
    <property type="match status" value="1"/>
</dbReference>
<comment type="function">
    <text>P2 proheads and capsids consist primarily of N*, a 36.7 kDa protein and two minor components, H1 (39 kDa) and H2 (38.6 kDa).</text>
</comment>
<comment type="subcellular location">
    <subcellularLocation>
        <location evidence="2">Virion</location>
    </subcellularLocation>
</comment>
<comment type="PTM">
    <text evidence="1">N*, H1 and H2 all derive from full-length N protein by N-terminal processing.</text>
</comment>
<comment type="similarity">
    <text evidence="2">Belongs to the P2-like viruses major capsid protein family.</text>
</comment>
<accession>P25477</accession>
<reference key="1">
    <citation type="journal article" date="1991" name="Nucleic Acids Res.">
        <title>Nucleotide sequence of the DNA packaging and capsid synthesis genes of bacteriophage P2.</title>
        <authorList>
            <person name="Linderoth N.A."/>
            <person name="Ziermann R."/>
            <person name="Haggaard-Ljungquist E."/>
            <person name="Christie G.E."/>
            <person name="Calendar R."/>
        </authorList>
    </citation>
    <scope>NUCLEOTIDE SEQUENCE [GENOMIC DNA]</scope>
</reference>
<reference key="2">
    <citation type="journal article" date="1991" name="Virology">
        <title>Morphopoietic switch mutations of bacteriophage P2.</title>
        <authorList>
            <person name="Six E.W."/>
            <person name="Sunshine M.G."/>
            <person name="Williams J."/>
            <person name="Haggaard-Ljungquist E."/>
            <person name="Lindqvist B.H."/>
        </authorList>
    </citation>
    <scope>NUCLEOTIDE SEQUENCE [GENOMIC DNA]</scope>
</reference>
<reference key="3">
    <citation type="journal article" date="1996" name="Virology">
        <title>The N-terminal part of bacteriophage P2 capsid protein is essential for postassembly maturation of P2 and P4 capsids.</title>
        <authorList>
            <person name="Bjerve K."/>
            <person name="Lindqvist B.H."/>
        </authorList>
    </citation>
    <scope>PROTEOLYTIC PROCESSING</scope>
</reference>
<keyword id="KW-0002">3D-structure</keyword>
<keyword id="KW-0167">Capsid protein</keyword>
<keyword id="KW-0426">Late protein</keyword>
<keyword id="KW-1185">Reference proteome</keyword>
<keyword id="KW-0946">Virion</keyword>
<evidence type="ECO:0000269" key="1">
    <source>
    </source>
</evidence>
<evidence type="ECO:0000305" key="2"/>
<sequence>MRQETRFKFNAYLSRVAELNGIDAGDVSKKFTVEPSVTQTLMNTMQESSDFLTRINIVPVSEMKGEKIGIGVTGSIASTTDTAGGTERQPKDFSKLASNKYECDQINFDFYIRYKTLDLWARYQDFQLRIRNAIIKRQSLDFIMAGFNGVKRAETSDRSSNPMLQDVAVGWLQKYRNEAPARVMSKVTDEEGRTTSEVIRVGKGGDYASLDALVMDATNNLIEPWYQEDPDLVVIVGRQLLADKYFPIVNKEQDNSEMLAADVIISQKRIGNLPAVRVPYFPADAMLITKLENLSIYYMDDSHRRVIEENPKLDRVENYESMNIDYVVEDYAAGCLVEKIKVGDFSTPAKATAEPGA</sequence>